<keyword id="KW-0963">Cytoplasm</keyword>
<keyword id="KW-1185">Reference proteome</keyword>
<keyword id="KW-0690">Ribosome biogenesis</keyword>
<proteinExistence type="inferred from homology"/>
<comment type="function">
    <text evidence="1">One of several proteins that assist in the late maturation steps of the functional core of the 30S ribosomal subunit. Associates with free 30S ribosomal subunits (but not with 30S subunits that are part of 70S ribosomes or polysomes). Required for efficient processing of 16S rRNA. May interact with the 5'-terminal helix region of 16S rRNA.</text>
</comment>
<comment type="subunit">
    <text evidence="1">Monomer. Binds 30S ribosomal subunits, but not 50S ribosomal subunits or 70S ribosomes.</text>
</comment>
<comment type="subcellular location">
    <subcellularLocation>
        <location evidence="1">Cytoplasm</location>
    </subcellularLocation>
</comment>
<comment type="similarity">
    <text evidence="1">Belongs to the RbfA family.</text>
</comment>
<reference key="1">
    <citation type="submission" date="2008-08" db="EMBL/GenBank/DDBJ databases">
        <title>The complete genome sequence of Thermodesulfovibrio yellowstonii strain ATCC 51303 / DSM 11347 / YP87.</title>
        <authorList>
            <person name="Dodson R.J."/>
            <person name="Durkin A.S."/>
            <person name="Wu M."/>
            <person name="Eisen J."/>
            <person name="Sutton G."/>
        </authorList>
    </citation>
    <scope>NUCLEOTIDE SEQUENCE [LARGE SCALE GENOMIC DNA]</scope>
    <source>
        <strain>ATCC 51303 / DSM 11347 / YP87</strain>
    </source>
</reference>
<organism>
    <name type="scientific">Thermodesulfovibrio yellowstonii (strain ATCC 51303 / DSM 11347 / YP87)</name>
    <dbReference type="NCBI Taxonomy" id="289376"/>
    <lineage>
        <taxon>Bacteria</taxon>
        <taxon>Pseudomonadati</taxon>
        <taxon>Nitrospirota</taxon>
        <taxon>Thermodesulfovibrionia</taxon>
        <taxon>Thermodesulfovibrionales</taxon>
        <taxon>Thermodesulfovibrionaceae</taxon>
        <taxon>Thermodesulfovibrio</taxon>
    </lineage>
</organism>
<feature type="chain" id="PRO_1000088940" description="Ribosome-binding factor A">
    <location>
        <begin position="1"/>
        <end position="118"/>
    </location>
</feature>
<dbReference type="EMBL" id="CP001147">
    <property type="protein sequence ID" value="ACI20500.1"/>
    <property type="molecule type" value="Genomic_DNA"/>
</dbReference>
<dbReference type="RefSeq" id="WP_012545236.1">
    <property type="nucleotide sequence ID" value="NC_011296.1"/>
</dbReference>
<dbReference type="RefSeq" id="YP_002249675.1">
    <property type="nucleotide sequence ID" value="NC_011296.1"/>
</dbReference>
<dbReference type="SMR" id="B5YHT9"/>
<dbReference type="FunCoup" id="B5YHT9">
    <property type="interactions" value="418"/>
</dbReference>
<dbReference type="STRING" id="289376.THEYE_A1885"/>
<dbReference type="EnsemblBacteria" id="ACI20500">
    <property type="protein sequence ID" value="ACI20500"/>
    <property type="gene ID" value="THEYE_A1885"/>
</dbReference>
<dbReference type="KEGG" id="tye:THEYE_A1885"/>
<dbReference type="PATRIC" id="fig|289376.4.peg.1841"/>
<dbReference type="eggNOG" id="COG0858">
    <property type="taxonomic scope" value="Bacteria"/>
</dbReference>
<dbReference type="HOGENOM" id="CLU_089475_6_3_0"/>
<dbReference type="InParanoid" id="B5YHT9"/>
<dbReference type="OrthoDB" id="307788at2"/>
<dbReference type="Proteomes" id="UP000000718">
    <property type="component" value="Chromosome"/>
</dbReference>
<dbReference type="GO" id="GO:0005829">
    <property type="term" value="C:cytosol"/>
    <property type="evidence" value="ECO:0000318"/>
    <property type="project" value="GO_Central"/>
</dbReference>
<dbReference type="GO" id="GO:0043024">
    <property type="term" value="F:ribosomal small subunit binding"/>
    <property type="evidence" value="ECO:0000318"/>
    <property type="project" value="GO_Central"/>
</dbReference>
<dbReference type="GO" id="GO:0030490">
    <property type="term" value="P:maturation of SSU-rRNA"/>
    <property type="evidence" value="ECO:0007669"/>
    <property type="project" value="UniProtKB-UniRule"/>
</dbReference>
<dbReference type="GO" id="GO:0042254">
    <property type="term" value="P:ribosome biogenesis"/>
    <property type="evidence" value="ECO:0000318"/>
    <property type="project" value="GO_Central"/>
</dbReference>
<dbReference type="FunFam" id="3.30.300.20:FF:000009">
    <property type="entry name" value="Ribosome-binding factor A"/>
    <property type="match status" value="1"/>
</dbReference>
<dbReference type="Gene3D" id="3.30.300.20">
    <property type="match status" value="1"/>
</dbReference>
<dbReference type="HAMAP" id="MF_00003">
    <property type="entry name" value="RbfA"/>
    <property type="match status" value="1"/>
</dbReference>
<dbReference type="InterPro" id="IPR015946">
    <property type="entry name" value="KH_dom-like_a/b"/>
</dbReference>
<dbReference type="InterPro" id="IPR000238">
    <property type="entry name" value="RbfA"/>
</dbReference>
<dbReference type="InterPro" id="IPR023799">
    <property type="entry name" value="RbfA_dom_sf"/>
</dbReference>
<dbReference type="InterPro" id="IPR020053">
    <property type="entry name" value="Ribosome-bd_factorA_CS"/>
</dbReference>
<dbReference type="NCBIfam" id="TIGR00082">
    <property type="entry name" value="rbfA"/>
    <property type="match status" value="1"/>
</dbReference>
<dbReference type="PANTHER" id="PTHR33515">
    <property type="entry name" value="RIBOSOME-BINDING FACTOR A, CHLOROPLASTIC-RELATED"/>
    <property type="match status" value="1"/>
</dbReference>
<dbReference type="PANTHER" id="PTHR33515:SF1">
    <property type="entry name" value="RIBOSOME-BINDING FACTOR A, CHLOROPLASTIC-RELATED"/>
    <property type="match status" value="1"/>
</dbReference>
<dbReference type="Pfam" id="PF02033">
    <property type="entry name" value="RBFA"/>
    <property type="match status" value="1"/>
</dbReference>
<dbReference type="SUPFAM" id="SSF89919">
    <property type="entry name" value="Ribosome-binding factor A, RbfA"/>
    <property type="match status" value="1"/>
</dbReference>
<dbReference type="PROSITE" id="PS01319">
    <property type="entry name" value="RBFA"/>
    <property type="match status" value="1"/>
</dbReference>
<evidence type="ECO:0000255" key="1">
    <source>
        <dbReference type="HAMAP-Rule" id="MF_00003"/>
    </source>
</evidence>
<sequence length="118" mass="13853">MQPYKRAQRLKVLLKEEVAEIILHKIKDPRLGFITVTDVELSDDLRIAKVFISVLKTEDRQLTLQILNDAKGFVRSEIAKRLRIKIIPTFEFLFDESIDRGFRIDQLLKEIKKTSEEV</sequence>
<accession>B5YHT9</accession>
<name>RBFA_THEYD</name>
<protein>
    <recommendedName>
        <fullName evidence="1">Ribosome-binding factor A</fullName>
    </recommendedName>
</protein>
<gene>
    <name evidence="1" type="primary">rbfA</name>
    <name type="ordered locus">THEYE_A1885</name>
</gene>